<gene>
    <name type="primary">Blm</name>
    <name type="synonym">mus309</name>
    <name type="ORF">CG6920</name>
</gene>
<protein>
    <recommendedName>
        <fullName evidence="10">RecQ-like DNA helicase Blm</fullName>
        <ecNumber evidence="2">5.6.2.4</ecNumber>
    </recommendedName>
    <alternativeName>
        <fullName>Bloom syndrome helicase ortholog</fullName>
    </alternativeName>
    <alternativeName>
        <fullName>Bloom syndrome protein homolog</fullName>
        <shortName>Dmblm</shortName>
    </alternativeName>
    <alternativeName>
        <fullName evidence="10">DNA 3'-5' helicase BLM</fullName>
    </alternativeName>
    <alternativeName>
        <fullName>Mutagen-sensitive protein 309</fullName>
    </alternativeName>
    <alternativeName>
        <fullName>RecQ helicase homolog</fullName>
    </alternativeName>
</protein>
<evidence type="ECO:0000250" key="1"/>
<evidence type="ECO:0000250" key="2">
    <source>
        <dbReference type="UniProtKB" id="P54132"/>
    </source>
</evidence>
<evidence type="ECO:0000255" key="3">
    <source>
        <dbReference type="PROSITE-ProRule" id="PRU00328"/>
    </source>
</evidence>
<evidence type="ECO:0000255" key="4">
    <source>
        <dbReference type="PROSITE-ProRule" id="PRU00541"/>
    </source>
</evidence>
<evidence type="ECO:0000255" key="5">
    <source>
        <dbReference type="PROSITE-ProRule" id="PRU00542"/>
    </source>
</evidence>
<evidence type="ECO:0000256" key="6">
    <source>
        <dbReference type="SAM" id="MobiDB-lite"/>
    </source>
</evidence>
<evidence type="ECO:0000269" key="7">
    <source>
    </source>
</evidence>
<evidence type="ECO:0000269" key="8">
    <source>
    </source>
</evidence>
<evidence type="ECO:0000269" key="9">
    <source>
    </source>
</evidence>
<evidence type="ECO:0000305" key="10"/>
<organism>
    <name type="scientific">Drosophila melanogaster</name>
    <name type="common">Fruit fly</name>
    <dbReference type="NCBI Taxonomy" id="7227"/>
    <lineage>
        <taxon>Eukaryota</taxon>
        <taxon>Metazoa</taxon>
        <taxon>Ecdysozoa</taxon>
        <taxon>Arthropoda</taxon>
        <taxon>Hexapoda</taxon>
        <taxon>Insecta</taxon>
        <taxon>Pterygota</taxon>
        <taxon>Neoptera</taxon>
        <taxon>Endopterygota</taxon>
        <taxon>Diptera</taxon>
        <taxon>Brachycera</taxon>
        <taxon>Muscomorpha</taxon>
        <taxon>Ephydroidea</taxon>
        <taxon>Drosophilidae</taxon>
        <taxon>Drosophila</taxon>
        <taxon>Sophophora</taxon>
    </lineage>
</organism>
<keyword id="KW-0067">ATP-binding</keyword>
<keyword id="KW-0227">DNA damage</keyword>
<keyword id="KW-0234">DNA repair</keyword>
<keyword id="KW-0235">DNA replication</keyword>
<keyword id="KW-0238">DNA-binding</keyword>
<keyword id="KW-0347">Helicase</keyword>
<keyword id="KW-0378">Hydrolase</keyword>
<keyword id="KW-0413">Isomerase</keyword>
<keyword id="KW-0479">Metal-binding</keyword>
<keyword id="KW-0547">Nucleotide-binding</keyword>
<keyword id="KW-0539">Nucleus</keyword>
<keyword id="KW-0597">Phosphoprotein</keyword>
<keyword id="KW-1185">Reference proteome</keyword>
<keyword id="KW-0677">Repeat</keyword>
<keyword id="KW-0862">Zinc</keyword>
<name>BLM_DROME</name>
<accession>Q9VGI8</accession>
<accession>Q9Y062</accession>
<comment type="function">
    <text evidence="2 9">Participates in DNA replication and repair (By similarity). Exhibits a magnesium-dependent ATP-dependent DNA-helicase activity that unwinds single- and double-stranded DNA in a 3'-5' direction (By similarity). Involved in DNA double strand break repair, including the synthesis-dependent strand annealing (SDSA) pathway (PubMed:25205745). Involved in DNA interstrand cross-link repair (PubMed:25205745).</text>
</comment>
<comment type="catalytic activity">
    <reaction evidence="2">
        <text>Couples ATP hydrolysis with the unwinding of duplex DNA by translocating in the 3'-5' direction.</text>
        <dbReference type="EC" id="5.6.2.4"/>
    </reaction>
</comment>
<comment type="catalytic activity">
    <reaction evidence="2">
        <text>ATP + H2O = ADP + phosphate + H(+)</text>
        <dbReference type="Rhea" id="RHEA:13065"/>
        <dbReference type="ChEBI" id="CHEBI:15377"/>
        <dbReference type="ChEBI" id="CHEBI:15378"/>
        <dbReference type="ChEBI" id="CHEBI:30616"/>
        <dbReference type="ChEBI" id="CHEBI:43474"/>
        <dbReference type="ChEBI" id="CHEBI:456216"/>
    </reaction>
</comment>
<comment type="cofactor">
    <cofactor evidence="2">
        <name>Zn(2+)</name>
        <dbReference type="ChEBI" id="CHEBI:29105"/>
    </cofactor>
    <text evidence="2">Binds 1 zinc ion per subunit.</text>
</comment>
<comment type="subunit">
    <text evidence="2">Monomer. Homodimer (via N-terminus). Homotetramer (via N-terminus); dimer of dimers. Homohexamer (via N-terminus). Self-association negatively regulates DNA unwinding amplitude and rate. Oligomer forms dissociate into monomer in presence of ATP.</text>
</comment>
<comment type="subcellular location">
    <subcellularLocation>
        <location evidence="1">Nucleus</location>
    </subcellularLocation>
</comment>
<comment type="domain">
    <text evidence="2">The N-terminal region mediates dimerization and homooligomerization. Both the helicase ATP-binding domain and the helicase C-terminal domain form intramolecular interactions with the HRDC domain in a ATP-dependent manner. The HRDC domain is required for single-stranded DNA (ssDNA) and DNA Holliday junction binding.</text>
</comment>
<comment type="similarity">
    <text evidence="10">Belongs to the helicase family. RecQ subfamily.</text>
</comment>
<feature type="chain" id="PRO_0000205044" description="RecQ-like DNA helicase Blm">
    <location>
        <begin position="1"/>
        <end position="1487"/>
    </location>
</feature>
<feature type="repeat" description="1" evidence="7">
    <location>
        <begin position="89"/>
        <end position="112"/>
    </location>
</feature>
<feature type="repeat" description="2" evidence="7">
    <location>
        <begin position="115"/>
        <end position="138"/>
    </location>
</feature>
<feature type="domain" description="Helicase ATP-binding" evidence="2 4">
    <location>
        <begin position="746"/>
        <end position="921"/>
    </location>
</feature>
<feature type="domain" description="Helicase C-terminal" evidence="2 5">
    <location>
        <begin position="944"/>
        <end position="1093"/>
    </location>
</feature>
<feature type="domain" description="HRDC" evidence="2 3">
    <location>
        <begin position="1283"/>
        <end position="1363"/>
    </location>
</feature>
<feature type="region of interest" description="Disordered" evidence="6">
    <location>
        <begin position="17"/>
        <end position="87"/>
    </location>
</feature>
<feature type="region of interest" description="2 X 24 AA repeats of L-D-L-S-V-S-P-L-A-E-L-[SP]-A-K-K-K-[YS]-[AD]-R-D-[SP]-P-P-K-P">
    <location>
        <begin position="89"/>
        <end position="138"/>
    </location>
</feature>
<feature type="region of interest" description="Disordered" evidence="6">
    <location>
        <begin position="126"/>
        <end position="258"/>
    </location>
</feature>
<feature type="region of interest" description="Disordered" evidence="6">
    <location>
        <begin position="271"/>
        <end position="331"/>
    </location>
</feature>
<feature type="region of interest" description="Disordered" evidence="6">
    <location>
        <begin position="669"/>
        <end position="688"/>
    </location>
</feature>
<feature type="region of interest" description="3' overhang DNA-binding" evidence="2">
    <location>
        <begin position="967"/>
        <end position="969"/>
    </location>
</feature>
<feature type="region of interest" description="3' overhang DNA-binding" evidence="2">
    <location>
        <begin position="1069"/>
        <end position="1072"/>
    </location>
</feature>
<feature type="region of interest" description="3' overhang DNA-binding" evidence="2">
    <location>
        <begin position="1167"/>
        <end position="1169"/>
    </location>
</feature>
<feature type="region of interest" description="3' overhang DNA-binding" evidence="2">
    <location>
        <begin position="1178"/>
        <end position="1182"/>
    </location>
</feature>
<feature type="region of interest" description="Disordered" evidence="6">
    <location>
        <begin position="1424"/>
        <end position="1487"/>
    </location>
</feature>
<feature type="short sequence motif" description="DEAH box">
    <location>
        <begin position="865"/>
        <end position="868"/>
    </location>
</feature>
<feature type="short sequence motif" description="Nuclear localization signal" evidence="1">
    <location>
        <begin position="1416"/>
        <end position="1432"/>
    </location>
</feature>
<feature type="compositionally biased region" description="Polar residues" evidence="6">
    <location>
        <begin position="17"/>
        <end position="29"/>
    </location>
</feature>
<feature type="compositionally biased region" description="Basic and acidic residues" evidence="6">
    <location>
        <begin position="126"/>
        <end position="136"/>
    </location>
</feature>
<feature type="compositionally biased region" description="Basic and acidic residues" evidence="6">
    <location>
        <begin position="163"/>
        <end position="174"/>
    </location>
</feature>
<feature type="compositionally biased region" description="Basic and acidic residues" evidence="6">
    <location>
        <begin position="182"/>
        <end position="195"/>
    </location>
</feature>
<feature type="compositionally biased region" description="Basic and acidic residues" evidence="6">
    <location>
        <begin position="203"/>
        <end position="214"/>
    </location>
</feature>
<feature type="compositionally biased region" description="Polar residues" evidence="6">
    <location>
        <begin position="271"/>
        <end position="283"/>
    </location>
</feature>
<feature type="compositionally biased region" description="Polar residues" evidence="6">
    <location>
        <begin position="318"/>
        <end position="328"/>
    </location>
</feature>
<feature type="binding site" evidence="2">
    <location>
        <begin position="738"/>
        <end position="742"/>
    </location>
    <ligand>
        <name>ATP</name>
        <dbReference type="ChEBI" id="CHEBI:30616"/>
    </ligand>
</feature>
<feature type="binding site" evidence="2">
    <location>
        <begin position="762"/>
        <end position="766"/>
    </location>
    <ligand>
        <name>ATP</name>
        <dbReference type="ChEBI" id="CHEBI:30616"/>
    </ligand>
</feature>
<feature type="binding site" evidence="2">
    <location>
        <position position="1051"/>
    </location>
    <ligand>
        <name>ATP</name>
        <dbReference type="ChEBI" id="CHEBI:30616"/>
    </ligand>
</feature>
<feature type="binding site" evidence="2">
    <location>
        <position position="1105"/>
    </location>
    <ligand>
        <name>Zn(2+)</name>
        <dbReference type="ChEBI" id="CHEBI:29105"/>
    </ligand>
</feature>
<feature type="binding site" evidence="2">
    <location>
        <position position="1123"/>
    </location>
    <ligand>
        <name>Zn(2+)</name>
        <dbReference type="ChEBI" id="CHEBI:29105"/>
    </ligand>
</feature>
<feature type="binding site" evidence="2">
    <location>
        <position position="1131"/>
    </location>
    <ligand>
        <name>Zn(2+)</name>
        <dbReference type="ChEBI" id="CHEBI:29105"/>
    </ligand>
</feature>
<feature type="binding site" evidence="2">
    <location>
        <position position="1134"/>
    </location>
    <ligand>
        <name>Zn(2+)</name>
        <dbReference type="ChEBI" id="CHEBI:29105"/>
    </ligand>
</feature>
<feature type="binding site" evidence="2">
    <location>
        <position position="1313"/>
    </location>
    <ligand>
        <name>ATP</name>
        <dbReference type="ChEBI" id="CHEBI:30616"/>
    </ligand>
</feature>
<feature type="site" description="3' overhang DNA-binding" evidence="2">
    <location>
        <position position="878"/>
    </location>
</feature>
<feature type="site" description="3' overhang DNA-binding; via amide nitrogen" evidence="2">
    <location>
        <position position="990"/>
    </location>
</feature>
<feature type="site" description="3' overhang DNA-binding" evidence="2">
    <location>
        <position position="1015"/>
    </location>
</feature>
<feature type="site" description="3' overhang DNA-binding" evidence="2">
    <location>
        <position position="1037"/>
    </location>
</feature>
<feature type="site" description="3' overhang DNA-binding" evidence="2">
    <location>
        <position position="1167"/>
    </location>
</feature>
<feature type="modified residue" description="Phosphoserine" evidence="8">
    <location>
        <position position="52"/>
    </location>
</feature>
<feature type="modified residue" description="Phosphoserine" evidence="8">
    <location>
        <position position="53"/>
    </location>
</feature>
<feature type="modified residue" description="Phosphoserine" evidence="8">
    <location>
        <position position="92"/>
    </location>
</feature>
<feature type="modified residue" description="Phosphoserine" evidence="8">
    <location>
        <position position="94"/>
    </location>
</feature>
<feature type="modified residue" description="Phosphoserine" evidence="8">
    <location>
        <position position="108"/>
    </location>
</feature>
<feature type="modified residue" description="Phosphothreonine" evidence="8">
    <location>
        <position position="113"/>
    </location>
</feature>
<feature type="modified residue" description="Phosphoserine" evidence="8">
    <location>
        <position position="118"/>
    </location>
</feature>
<feature type="modified residue" description="Phosphoserine" evidence="8">
    <location>
        <position position="120"/>
    </location>
</feature>
<feature type="modified residue" description="Phosphoserine" evidence="8">
    <location>
        <position position="130"/>
    </location>
</feature>
<feature type="modified residue" description="Phosphoserine" evidence="8">
    <location>
        <position position="151"/>
    </location>
</feature>
<feature type="modified residue" description="Phosphoserine" evidence="8">
    <location>
        <position position="153"/>
    </location>
</feature>
<feature type="modified residue" description="Phosphoserine" evidence="8">
    <location>
        <position position="180"/>
    </location>
</feature>
<feature type="modified residue" description="Phosphoserine" evidence="8">
    <location>
        <position position="182"/>
    </location>
</feature>
<feature type="modified residue" description="Phosphoserine" evidence="8">
    <location>
        <position position="197"/>
    </location>
</feature>
<feature type="modified residue" description="Phosphoserine" evidence="8">
    <location>
        <position position="203"/>
    </location>
</feature>
<feature type="modified residue" description="Phosphoserine" evidence="8">
    <location>
        <position position="328"/>
    </location>
</feature>
<feature type="modified residue" description="Phosphoserine" evidence="8">
    <location>
        <position position="506"/>
    </location>
</feature>
<feature type="modified residue" description="Phosphoserine" evidence="8">
    <location>
        <position position="509"/>
    </location>
</feature>
<feature type="modified residue" description="Phosphoserine" evidence="8">
    <location>
        <position position="510"/>
    </location>
</feature>
<feature type="modified residue" description="Phosphoserine" evidence="8">
    <location>
        <position position="535"/>
    </location>
</feature>
<feature type="sequence conflict" description="In Ref. 1; AAD41441." evidence="10" ref="1">
    <original>K</original>
    <variation>E</variation>
    <location>
        <position position="98"/>
    </location>
</feature>
<feature type="sequence conflict" description="In Ref. 1; AAD41441." evidence="10" ref="1">
    <original>K</original>
    <variation>P</variation>
    <location>
        <position position="110"/>
    </location>
</feature>
<feature type="sequence conflict" description="In Ref. 1; AAD41441." evidence="10" ref="1">
    <original>L</original>
    <variation>P</variation>
    <location>
        <position position="126"/>
    </location>
</feature>
<feature type="sequence conflict" description="In Ref. 1; AAD41441." evidence="10" ref="1">
    <original>SPK</original>
    <variation>PPP</variation>
    <location>
        <begin position="134"/>
        <end position="136"/>
    </location>
</feature>
<feature type="sequence conflict" description="In Ref. 1; AAD41441." evidence="10" ref="1">
    <original>Q</original>
    <variation>P</variation>
    <location>
        <position position="169"/>
    </location>
</feature>
<feature type="sequence conflict" description="In Ref. 1; AAD41441." evidence="10" ref="1">
    <original>P</original>
    <variation>S</variation>
    <location>
        <position position="222"/>
    </location>
</feature>
<feature type="sequence conflict" description="In Ref. 1; AAD41441." evidence="10" ref="1">
    <original>Y</original>
    <variation>N</variation>
    <location>
        <position position="299"/>
    </location>
</feature>
<feature type="sequence conflict" description="In Ref. 1; AAD41441." evidence="10" ref="1">
    <original>M</original>
    <variation>V</variation>
    <location>
        <position position="417"/>
    </location>
</feature>
<feature type="sequence conflict" description="In Ref. 1; AAD41441." evidence="10" ref="1">
    <original>Q</original>
    <variation>R</variation>
    <location>
        <position position="459"/>
    </location>
</feature>
<feature type="sequence conflict" description="In Ref. 1; AAD41441." evidence="10" ref="1">
    <original>S</original>
    <variation>C</variation>
    <location>
        <position position="471"/>
    </location>
</feature>
<feature type="sequence conflict" description="In Ref. 1; AAD41441." evidence="10" ref="1">
    <original>H</original>
    <variation>P</variation>
    <location>
        <position position="496"/>
    </location>
</feature>
<feature type="sequence conflict" description="In Ref. 1; AAD41441." evidence="10" ref="1">
    <original>D</original>
    <variation>G</variation>
    <location>
        <position position="594"/>
    </location>
</feature>
<feature type="sequence conflict" description="In Ref. 1; AAD41441." evidence="10" ref="1">
    <original>G</original>
    <variation>A</variation>
    <location>
        <position position="614"/>
    </location>
</feature>
<feature type="sequence conflict" description="In Ref. 1; AAD41441." evidence="10" ref="1">
    <original>K</original>
    <variation>E</variation>
    <location>
        <position position="805"/>
    </location>
</feature>
<feature type="sequence conflict" description="In Ref. 1; AAD41441." evidence="10" ref="1">
    <original>E</original>
    <variation>G</variation>
    <location>
        <position position="1116"/>
    </location>
</feature>
<reference key="1">
    <citation type="journal article" date="1999" name="Genetics">
        <title>Evolution of the RECQ family of helicases: a Drosophila homolog, Dmblm, is similar to the human Bloom syndrome gene.</title>
        <authorList>
            <person name="Kusano K."/>
            <person name="Berres M.E."/>
            <person name="Engels W.R."/>
        </authorList>
    </citation>
    <scope>NUCLEOTIDE SEQUENCE [MRNA]</scope>
    <scope>REPEATS</scope>
    <source>
        <strain>Canton-S</strain>
    </source>
</reference>
<reference key="2">
    <citation type="journal article" date="2000" name="Science">
        <title>The genome sequence of Drosophila melanogaster.</title>
        <authorList>
            <person name="Adams M.D."/>
            <person name="Celniker S.E."/>
            <person name="Holt R.A."/>
            <person name="Evans C.A."/>
            <person name="Gocayne J.D."/>
            <person name="Amanatides P.G."/>
            <person name="Scherer S.E."/>
            <person name="Li P.W."/>
            <person name="Hoskins R.A."/>
            <person name="Galle R.F."/>
            <person name="George R.A."/>
            <person name="Lewis S.E."/>
            <person name="Richards S."/>
            <person name="Ashburner M."/>
            <person name="Henderson S.N."/>
            <person name="Sutton G.G."/>
            <person name="Wortman J.R."/>
            <person name="Yandell M.D."/>
            <person name="Zhang Q."/>
            <person name="Chen L.X."/>
            <person name="Brandon R.C."/>
            <person name="Rogers Y.-H.C."/>
            <person name="Blazej R.G."/>
            <person name="Champe M."/>
            <person name="Pfeiffer B.D."/>
            <person name="Wan K.H."/>
            <person name="Doyle C."/>
            <person name="Baxter E.G."/>
            <person name="Helt G."/>
            <person name="Nelson C.R."/>
            <person name="Miklos G.L.G."/>
            <person name="Abril J.F."/>
            <person name="Agbayani A."/>
            <person name="An H.-J."/>
            <person name="Andrews-Pfannkoch C."/>
            <person name="Baldwin D."/>
            <person name="Ballew R.M."/>
            <person name="Basu A."/>
            <person name="Baxendale J."/>
            <person name="Bayraktaroglu L."/>
            <person name="Beasley E.M."/>
            <person name="Beeson K.Y."/>
            <person name="Benos P.V."/>
            <person name="Berman B.P."/>
            <person name="Bhandari D."/>
            <person name="Bolshakov S."/>
            <person name="Borkova D."/>
            <person name="Botchan M.R."/>
            <person name="Bouck J."/>
            <person name="Brokstein P."/>
            <person name="Brottier P."/>
            <person name="Burtis K.C."/>
            <person name="Busam D.A."/>
            <person name="Butler H."/>
            <person name="Cadieu E."/>
            <person name="Center A."/>
            <person name="Chandra I."/>
            <person name="Cherry J.M."/>
            <person name="Cawley S."/>
            <person name="Dahlke C."/>
            <person name="Davenport L.B."/>
            <person name="Davies P."/>
            <person name="de Pablos B."/>
            <person name="Delcher A."/>
            <person name="Deng Z."/>
            <person name="Mays A.D."/>
            <person name="Dew I."/>
            <person name="Dietz S.M."/>
            <person name="Dodson K."/>
            <person name="Doup L.E."/>
            <person name="Downes M."/>
            <person name="Dugan-Rocha S."/>
            <person name="Dunkov B.C."/>
            <person name="Dunn P."/>
            <person name="Durbin K.J."/>
            <person name="Evangelista C.C."/>
            <person name="Ferraz C."/>
            <person name="Ferriera S."/>
            <person name="Fleischmann W."/>
            <person name="Fosler C."/>
            <person name="Gabrielian A.E."/>
            <person name="Garg N.S."/>
            <person name="Gelbart W.M."/>
            <person name="Glasser K."/>
            <person name="Glodek A."/>
            <person name="Gong F."/>
            <person name="Gorrell J.H."/>
            <person name="Gu Z."/>
            <person name="Guan P."/>
            <person name="Harris M."/>
            <person name="Harris N.L."/>
            <person name="Harvey D.A."/>
            <person name="Heiman T.J."/>
            <person name="Hernandez J.R."/>
            <person name="Houck J."/>
            <person name="Hostin D."/>
            <person name="Houston K.A."/>
            <person name="Howland T.J."/>
            <person name="Wei M.-H."/>
            <person name="Ibegwam C."/>
            <person name="Jalali M."/>
            <person name="Kalush F."/>
            <person name="Karpen G.H."/>
            <person name="Ke Z."/>
            <person name="Kennison J.A."/>
            <person name="Ketchum K.A."/>
            <person name="Kimmel B.E."/>
            <person name="Kodira C.D."/>
            <person name="Kraft C.L."/>
            <person name="Kravitz S."/>
            <person name="Kulp D."/>
            <person name="Lai Z."/>
            <person name="Lasko P."/>
            <person name="Lei Y."/>
            <person name="Levitsky A.A."/>
            <person name="Li J.H."/>
            <person name="Li Z."/>
            <person name="Liang Y."/>
            <person name="Lin X."/>
            <person name="Liu X."/>
            <person name="Mattei B."/>
            <person name="McIntosh T.C."/>
            <person name="McLeod M.P."/>
            <person name="McPherson D."/>
            <person name="Merkulov G."/>
            <person name="Milshina N.V."/>
            <person name="Mobarry C."/>
            <person name="Morris J."/>
            <person name="Moshrefi A."/>
            <person name="Mount S.M."/>
            <person name="Moy M."/>
            <person name="Murphy B."/>
            <person name="Murphy L."/>
            <person name="Muzny D.M."/>
            <person name="Nelson D.L."/>
            <person name="Nelson D.R."/>
            <person name="Nelson K.A."/>
            <person name="Nixon K."/>
            <person name="Nusskern D.R."/>
            <person name="Pacleb J.M."/>
            <person name="Palazzolo M."/>
            <person name="Pittman G.S."/>
            <person name="Pan S."/>
            <person name="Pollard J."/>
            <person name="Puri V."/>
            <person name="Reese M.G."/>
            <person name="Reinert K."/>
            <person name="Remington K."/>
            <person name="Saunders R.D.C."/>
            <person name="Scheeler F."/>
            <person name="Shen H."/>
            <person name="Shue B.C."/>
            <person name="Siden-Kiamos I."/>
            <person name="Simpson M."/>
            <person name="Skupski M.P."/>
            <person name="Smith T.J."/>
            <person name="Spier E."/>
            <person name="Spradling A.C."/>
            <person name="Stapleton M."/>
            <person name="Strong R."/>
            <person name="Sun E."/>
            <person name="Svirskas R."/>
            <person name="Tector C."/>
            <person name="Turner R."/>
            <person name="Venter E."/>
            <person name="Wang A.H."/>
            <person name="Wang X."/>
            <person name="Wang Z.-Y."/>
            <person name="Wassarman D.A."/>
            <person name="Weinstock G.M."/>
            <person name="Weissenbach J."/>
            <person name="Williams S.M."/>
            <person name="Woodage T."/>
            <person name="Worley K.C."/>
            <person name="Wu D."/>
            <person name="Yang S."/>
            <person name="Yao Q.A."/>
            <person name="Ye J."/>
            <person name="Yeh R.-F."/>
            <person name="Zaveri J.S."/>
            <person name="Zhan M."/>
            <person name="Zhang G."/>
            <person name="Zhao Q."/>
            <person name="Zheng L."/>
            <person name="Zheng X.H."/>
            <person name="Zhong F.N."/>
            <person name="Zhong W."/>
            <person name="Zhou X."/>
            <person name="Zhu S.C."/>
            <person name="Zhu X."/>
            <person name="Smith H.O."/>
            <person name="Gibbs R.A."/>
            <person name="Myers E.W."/>
            <person name="Rubin G.M."/>
            <person name="Venter J.C."/>
        </authorList>
    </citation>
    <scope>NUCLEOTIDE SEQUENCE [LARGE SCALE GENOMIC DNA]</scope>
    <source>
        <strain>Berkeley</strain>
    </source>
</reference>
<reference key="3">
    <citation type="journal article" date="2002" name="Genome Biol.">
        <title>Annotation of the Drosophila melanogaster euchromatic genome: a systematic review.</title>
        <authorList>
            <person name="Misra S."/>
            <person name="Crosby M.A."/>
            <person name="Mungall C.J."/>
            <person name="Matthews B.B."/>
            <person name="Campbell K.S."/>
            <person name="Hradecky P."/>
            <person name="Huang Y."/>
            <person name="Kaminker J.S."/>
            <person name="Millburn G.H."/>
            <person name="Prochnik S.E."/>
            <person name="Smith C.D."/>
            <person name="Tupy J.L."/>
            <person name="Whitfield E.J."/>
            <person name="Bayraktaroglu L."/>
            <person name="Berman B.P."/>
            <person name="Bettencourt B.R."/>
            <person name="Celniker S.E."/>
            <person name="de Grey A.D.N.J."/>
            <person name="Drysdale R.A."/>
            <person name="Harris N.L."/>
            <person name="Richter J."/>
            <person name="Russo S."/>
            <person name="Schroeder A.J."/>
            <person name="Shu S.Q."/>
            <person name="Stapleton M."/>
            <person name="Yamada C."/>
            <person name="Ashburner M."/>
            <person name="Gelbart W.M."/>
            <person name="Rubin G.M."/>
            <person name="Lewis S.E."/>
        </authorList>
    </citation>
    <scope>GENOME REANNOTATION</scope>
    <source>
        <strain>Berkeley</strain>
    </source>
</reference>
<reference key="4">
    <citation type="journal article" date="2008" name="J. Proteome Res.">
        <title>Phosphoproteome analysis of Drosophila melanogaster embryos.</title>
        <authorList>
            <person name="Zhai B."/>
            <person name="Villen J."/>
            <person name="Beausoleil S.A."/>
            <person name="Mintseris J."/>
            <person name="Gygi S.P."/>
        </authorList>
    </citation>
    <scope>PHOSPHORYLATION [LARGE SCALE ANALYSIS] AT SER-52; SER-53; SER-92; SER-94; SER-108; THR-113; SER-118; SER-120; SER-130; SER-151; SER-153; SER-180; SER-182; SER-197; SER-203; SER-328; SER-506; SER-509; SER-510 AND SER-535</scope>
    <scope>IDENTIFICATION BY MASS SPECTROMETRY</scope>
    <source>
        <tissue>Embryo</tissue>
    </source>
</reference>
<reference key="5">
    <citation type="journal article" date="2014" name="Genetics">
        <title>Drosophila FANCM helicase prevents spontaneous mitotic crossovers generated by the MUS81 and SLX1 nucleases.</title>
        <authorList>
            <person name="Kuo H.K."/>
            <person name="McMahan S."/>
            <person name="Rota C.M."/>
            <person name="Kohl K.P."/>
            <person name="Sekelsky J."/>
        </authorList>
    </citation>
    <scope>FUNCTION</scope>
</reference>
<dbReference type="EC" id="5.6.2.4" evidence="2"/>
<dbReference type="EMBL" id="U92536">
    <property type="protein sequence ID" value="AAD41441.1"/>
    <property type="molecule type" value="mRNA"/>
</dbReference>
<dbReference type="EMBL" id="AE014297">
    <property type="protein sequence ID" value="AAF54691.1"/>
    <property type="molecule type" value="Genomic_DNA"/>
</dbReference>
<dbReference type="RefSeq" id="NP_524319.2">
    <property type="nucleotide sequence ID" value="NM_079595.3"/>
</dbReference>
<dbReference type="SMR" id="Q9VGI8"/>
<dbReference type="BioGRID" id="66499">
    <property type="interactions" value="20"/>
</dbReference>
<dbReference type="DIP" id="DIP-23386N"/>
<dbReference type="FunCoup" id="Q9VGI8">
    <property type="interactions" value="179"/>
</dbReference>
<dbReference type="IntAct" id="Q9VGI8">
    <property type="interactions" value="7"/>
</dbReference>
<dbReference type="MINT" id="Q9VGI8"/>
<dbReference type="STRING" id="7227.FBpp0081910"/>
<dbReference type="iPTMnet" id="Q9VGI8"/>
<dbReference type="PaxDb" id="7227-FBpp0081910"/>
<dbReference type="EnsemblMetazoa" id="FBtr0082434">
    <property type="protein sequence ID" value="FBpp0081910"/>
    <property type="gene ID" value="FBgn0002906"/>
</dbReference>
<dbReference type="GeneID" id="41366"/>
<dbReference type="KEGG" id="dme:Dmel_CG6920"/>
<dbReference type="AGR" id="FB:FBgn0002906"/>
<dbReference type="CTD" id="641"/>
<dbReference type="FlyBase" id="FBgn0002906">
    <property type="gene designation" value="Blm"/>
</dbReference>
<dbReference type="VEuPathDB" id="VectorBase:FBgn0002906"/>
<dbReference type="eggNOG" id="KOG0351">
    <property type="taxonomic scope" value="Eukaryota"/>
</dbReference>
<dbReference type="GeneTree" id="ENSGT00940000156800"/>
<dbReference type="HOGENOM" id="CLU_004162_0_0_1"/>
<dbReference type="InParanoid" id="Q9VGI8"/>
<dbReference type="OMA" id="KVMRQKF"/>
<dbReference type="OrthoDB" id="10261556at2759"/>
<dbReference type="PhylomeDB" id="Q9VGI8"/>
<dbReference type="Reactome" id="R-DME-3108214">
    <property type="pathway name" value="SUMOylation of DNA damage response and repair proteins"/>
</dbReference>
<dbReference type="Reactome" id="R-DME-5693607">
    <property type="pathway name" value="Processing of DNA double-strand break ends"/>
</dbReference>
<dbReference type="Reactome" id="R-DME-6804756">
    <property type="pathway name" value="Regulation of TP53 Activity through Phosphorylation"/>
</dbReference>
<dbReference type="Reactome" id="R-DME-69473">
    <property type="pathway name" value="G2/M DNA damage checkpoint"/>
</dbReference>
<dbReference type="SignaLink" id="Q9VGI8"/>
<dbReference type="BioGRID-ORCS" id="41366">
    <property type="hits" value="0 hits in 3 CRISPR screens"/>
</dbReference>
<dbReference type="GenomeRNAi" id="41366"/>
<dbReference type="PRO" id="PR:Q9VGI8"/>
<dbReference type="Proteomes" id="UP000000803">
    <property type="component" value="Chromosome 3R"/>
</dbReference>
<dbReference type="Bgee" id="FBgn0002906">
    <property type="expression patterns" value="Expressed in spermatogonium in testis and 52 other cell types or tissues"/>
</dbReference>
<dbReference type="ExpressionAtlas" id="Q9VGI8">
    <property type="expression patterns" value="baseline and differential"/>
</dbReference>
<dbReference type="GO" id="GO:0005694">
    <property type="term" value="C:chromosome"/>
    <property type="evidence" value="ECO:0000318"/>
    <property type="project" value="GO_Central"/>
</dbReference>
<dbReference type="GO" id="GO:0005737">
    <property type="term" value="C:cytoplasm"/>
    <property type="evidence" value="ECO:0000318"/>
    <property type="project" value="GO_Central"/>
</dbReference>
<dbReference type="GO" id="GO:0005634">
    <property type="term" value="C:nucleus"/>
    <property type="evidence" value="ECO:0000314"/>
    <property type="project" value="FlyBase"/>
</dbReference>
<dbReference type="GO" id="GO:0031422">
    <property type="term" value="C:RecQ family helicase-topoisomerase III complex"/>
    <property type="evidence" value="ECO:0000250"/>
    <property type="project" value="FlyBase"/>
</dbReference>
<dbReference type="GO" id="GO:0043138">
    <property type="term" value="F:3'-5' DNA helicase activity"/>
    <property type="evidence" value="ECO:0000314"/>
    <property type="project" value="FlyBase"/>
</dbReference>
<dbReference type="GO" id="GO:0005524">
    <property type="term" value="F:ATP binding"/>
    <property type="evidence" value="ECO:0007669"/>
    <property type="project" value="UniProtKB-KW"/>
</dbReference>
<dbReference type="GO" id="GO:0016887">
    <property type="term" value="F:ATP hydrolysis activity"/>
    <property type="evidence" value="ECO:0007669"/>
    <property type="project" value="RHEA"/>
</dbReference>
<dbReference type="GO" id="GO:0003678">
    <property type="term" value="F:DNA helicase activity"/>
    <property type="evidence" value="ECO:0000250"/>
    <property type="project" value="FlyBase"/>
</dbReference>
<dbReference type="GO" id="GO:1990814">
    <property type="term" value="F:DNA/DNA annealing activity"/>
    <property type="evidence" value="ECO:0000314"/>
    <property type="project" value="FlyBase"/>
</dbReference>
<dbReference type="GO" id="GO:0009378">
    <property type="term" value="F:four-way junction helicase activity"/>
    <property type="evidence" value="ECO:0000318"/>
    <property type="project" value="GO_Central"/>
</dbReference>
<dbReference type="GO" id="GO:0046872">
    <property type="term" value="F:metal ion binding"/>
    <property type="evidence" value="ECO:0007669"/>
    <property type="project" value="UniProtKB-KW"/>
</dbReference>
<dbReference type="GO" id="GO:0000403">
    <property type="term" value="F:Y-form DNA binding"/>
    <property type="evidence" value="ECO:0000314"/>
    <property type="project" value="FlyBase"/>
</dbReference>
<dbReference type="GO" id="GO:0006974">
    <property type="term" value="P:DNA damage response"/>
    <property type="evidence" value="ECO:0000315"/>
    <property type="project" value="FlyBase"/>
</dbReference>
<dbReference type="GO" id="GO:0006281">
    <property type="term" value="P:DNA repair"/>
    <property type="evidence" value="ECO:0000315"/>
    <property type="project" value="FlyBase"/>
</dbReference>
<dbReference type="GO" id="GO:0006260">
    <property type="term" value="P:DNA replication"/>
    <property type="evidence" value="ECO:0000318"/>
    <property type="project" value="GO_Central"/>
</dbReference>
<dbReference type="GO" id="GO:0000732">
    <property type="term" value="P:DNA strand displacement"/>
    <property type="evidence" value="ECO:0000314"/>
    <property type="project" value="FlyBase"/>
</dbReference>
<dbReference type="GO" id="GO:0000731">
    <property type="term" value="P:DNA synthesis involved in DNA repair"/>
    <property type="evidence" value="ECO:0000315"/>
    <property type="project" value="FlyBase"/>
</dbReference>
<dbReference type="GO" id="GO:0006302">
    <property type="term" value="P:double-strand break repair"/>
    <property type="evidence" value="ECO:0000315"/>
    <property type="project" value="FlyBase"/>
</dbReference>
<dbReference type="GO" id="GO:1990918">
    <property type="term" value="P:double-strand break repair involved in meiotic recombination"/>
    <property type="evidence" value="ECO:0000315"/>
    <property type="project" value="FlyBase"/>
</dbReference>
<dbReference type="GO" id="GO:0000724">
    <property type="term" value="P:double-strand break repair via homologous recombination"/>
    <property type="evidence" value="ECO:0000315"/>
    <property type="project" value="FlyBase"/>
</dbReference>
<dbReference type="GO" id="GO:0006303">
    <property type="term" value="P:double-strand break repair via nonhomologous end joining"/>
    <property type="evidence" value="ECO:0000316"/>
    <property type="project" value="FlyBase"/>
</dbReference>
<dbReference type="GO" id="GO:0045003">
    <property type="term" value="P:double-strand break repair via synthesis-dependent strand annealing"/>
    <property type="evidence" value="ECO:0000315"/>
    <property type="project" value="FlyBase"/>
</dbReference>
<dbReference type="GO" id="GO:1901291">
    <property type="term" value="P:negative regulation of double-strand break repair via single-strand annealing"/>
    <property type="evidence" value="ECO:0000315"/>
    <property type="project" value="FlyBase"/>
</dbReference>
<dbReference type="GO" id="GO:0007131">
    <property type="term" value="P:reciprocal meiotic recombination"/>
    <property type="evidence" value="ECO:0000315"/>
    <property type="project" value="FlyBase"/>
</dbReference>
<dbReference type="CDD" id="cd18016">
    <property type="entry name" value="DEXHc_RecQ2_BLM"/>
    <property type="match status" value="1"/>
</dbReference>
<dbReference type="CDD" id="cd18794">
    <property type="entry name" value="SF2_C_RecQ"/>
    <property type="match status" value="1"/>
</dbReference>
<dbReference type="FunFam" id="1.10.150.80:FF:000013">
    <property type="entry name" value="Bloom syndrome protein homolog"/>
    <property type="match status" value="1"/>
</dbReference>
<dbReference type="FunFam" id="3.40.50.300:FF:000537">
    <property type="entry name" value="Bloom syndrome RecQ-like helicase"/>
    <property type="match status" value="1"/>
</dbReference>
<dbReference type="FunFam" id="3.40.50.300:FF:000340">
    <property type="entry name" value="Bloom syndrome, RecQ helicase"/>
    <property type="match status" value="1"/>
</dbReference>
<dbReference type="FunFam" id="1.10.10.10:FF:000495">
    <property type="entry name" value="RecQ family helicase MusN"/>
    <property type="match status" value="1"/>
</dbReference>
<dbReference type="Gene3D" id="1.10.150.80">
    <property type="entry name" value="HRDC domain"/>
    <property type="match status" value="1"/>
</dbReference>
<dbReference type="Gene3D" id="3.40.50.300">
    <property type="entry name" value="P-loop containing nucleotide triphosphate hydrolases"/>
    <property type="match status" value="2"/>
</dbReference>
<dbReference type="Gene3D" id="1.10.10.10">
    <property type="entry name" value="Winged helix-like DNA-binding domain superfamily/Winged helix DNA-binding domain"/>
    <property type="match status" value="1"/>
</dbReference>
<dbReference type="InterPro" id="IPR011545">
    <property type="entry name" value="DEAD/DEAH_box_helicase_dom"/>
</dbReference>
<dbReference type="InterPro" id="IPR002464">
    <property type="entry name" value="DNA/RNA_helicase_DEAH_CS"/>
</dbReference>
<dbReference type="InterPro" id="IPR004589">
    <property type="entry name" value="DNA_helicase_ATP-dep_RecQ"/>
</dbReference>
<dbReference type="InterPro" id="IPR014001">
    <property type="entry name" value="Helicase_ATP-bd"/>
</dbReference>
<dbReference type="InterPro" id="IPR001650">
    <property type="entry name" value="Helicase_C-like"/>
</dbReference>
<dbReference type="InterPro" id="IPR010997">
    <property type="entry name" value="HRDC-like_sf"/>
</dbReference>
<dbReference type="InterPro" id="IPR002121">
    <property type="entry name" value="HRDC_dom"/>
</dbReference>
<dbReference type="InterPro" id="IPR044876">
    <property type="entry name" value="HRDC_dom_sf"/>
</dbReference>
<dbReference type="InterPro" id="IPR027417">
    <property type="entry name" value="P-loop_NTPase"/>
</dbReference>
<dbReference type="InterPro" id="IPR032284">
    <property type="entry name" value="RecQ_Zn-bd"/>
</dbReference>
<dbReference type="InterPro" id="IPR018982">
    <property type="entry name" value="RQC_domain"/>
</dbReference>
<dbReference type="InterPro" id="IPR036388">
    <property type="entry name" value="WH-like_DNA-bd_sf"/>
</dbReference>
<dbReference type="NCBIfam" id="TIGR00614">
    <property type="entry name" value="recQ_fam"/>
    <property type="match status" value="1"/>
</dbReference>
<dbReference type="PANTHER" id="PTHR13710">
    <property type="entry name" value="DNA HELICASE RECQ FAMILY MEMBER"/>
    <property type="match status" value="1"/>
</dbReference>
<dbReference type="PANTHER" id="PTHR13710:SF153">
    <property type="entry name" value="RECQ-LIKE DNA HELICASE BLM"/>
    <property type="match status" value="1"/>
</dbReference>
<dbReference type="Pfam" id="PF00270">
    <property type="entry name" value="DEAD"/>
    <property type="match status" value="1"/>
</dbReference>
<dbReference type="Pfam" id="PF00271">
    <property type="entry name" value="Helicase_C"/>
    <property type="match status" value="1"/>
</dbReference>
<dbReference type="Pfam" id="PF00570">
    <property type="entry name" value="HRDC"/>
    <property type="match status" value="1"/>
</dbReference>
<dbReference type="Pfam" id="PF16124">
    <property type="entry name" value="RecQ_Zn_bind"/>
    <property type="match status" value="1"/>
</dbReference>
<dbReference type="Pfam" id="PF09382">
    <property type="entry name" value="RQC"/>
    <property type="match status" value="1"/>
</dbReference>
<dbReference type="SMART" id="SM00487">
    <property type="entry name" value="DEXDc"/>
    <property type="match status" value="1"/>
</dbReference>
<dbReference type="SMART" id="SM00490">
    <property type="entry name" value="HELICc"/>
    <property type="match status" value="1"/>
</dbReference>
<dbReference type="SMART" id="SM00341">
    <property type="entry name" value="HRDC"/>
    <property type="match status" value="1"/>
</dbReference>
<dbReference type="SMART" id="SM00956">
    <property type="entry name" value="RQC"/>
    <property type="match status" value="1"/>
</dbReference>
<dbReference type="SUPFAM" id="SSF47819">
    <property type="entry name" value="HRDC-like"/>
    <property type="match status" value="1"/>
</dbReference>
<dbReference type="SUPFAM" id="SSF52540">
    <property type="entry name" value="P-loop containing nucleoside triphosphate hydrolases"/>
    <property type="match status" value="2"/>
</dbReference>
<dbReference type="PROSITE" id="PS00690">
    <property type="entry name" value="DEAH_ATP_HELICASE"/>
    <property type="match status" value="1"/>
</dbReference>
<dbReference type="PROSITE" id="PS51192">
    <property type="entry name" value="HELICASE_ATP_BIND_1"/>
    <property type="match status" value="1"/>
</dbReference>
<dbReference type="PROSITE" id="PS51194">
    <property type="entry name" value="HELICASE_CTER"/>
    <property type="match status" value="1"/>
</dbReference>
<dbReference type="PROSITE" id="PS50967">
    <property type="entry name" value="HRDC"/>
    <property type="match status" value="1"/>
</dbReference>
<sequence>MSKKPVAQRKQLTLSSFIGLDGNSQSQPKSRAASVRSKPPAVYNPIFLDASSSDDETTEISSQSNNGTIATKKSSRDPRTAKLKKHTYLDLSVSPLAKLSAKKYARDSPKKPTSLDLSVSPLAELLAKKSDRDSPKKPVQNENSYTYRGLSESPVENKSIGDTLRKPPQKERKTSIVWLSDSPEKKVTQNERKILDSPLQRFSFEDFPNKENGNRHHLLTLPDSPPPPQPVKKPEKTMWQNETKTIQDKDSPANPLVSNNLASISTLLDSSRAPNTYKGSSRNLFEDSPEKSGSGEQGYKLGSAKENEIPTKPATASLERNSVTSSPSPAAPLKPRYSVAFDNSLADYLKDLAQNDNFSIDPNKQNTETLKSTLGFFRNTYVELMEKYCSLIDQIPAMHFNEIAGFQPNTFLKLKVMRQKFKARTQLVQNSLDKKESQLKAEQEALEKEEIEMQAEQAQQTVLSSSSPEKSRPIMPLPKVQEIKDEKIPNRNQLIHDLCGEPDNFSPPSSPRDTQLIPKRQQLINDLCGEPDDFSPPSKQNDPHLLRKCEELVHDLCEEPDDYLAQSMMLDGDLEEEQLNGPTQGTTTSGMDDDEDDLEGLLAEIEDEHQKMQGRRSEFNGYSYKELEAVKVKEKHKETPINISLDDDGFPEYDEAMFEQMHSQAAANKSRVSSAGPSTSKSVVPTKQTSALHSQKLSGNFHANVHNDGITGEFDGQKFEHSTRLMHGLSYSFGLKSFRPNQLQVINATLLGNDCFVLMPTGGGKSLCYQLPAILTEGVTIVISPLKSLIFDQINKLASLDICAKSLSGEQKMADVMAIYRDLESQPPMVKLLYVTPEKISSSARFQDTLDTLNSNNYISRFVIDEAHCVSQWGHDFRPDYKKLGVLKKRFPNVPTIALTATATPRVRLDILAQLNLKNCKWFLSSFNRSNLRYRVLPKKGVSTLDDISRYIRSKPQHFSGIIYCLSRKECDETSKKMCKDGVRAVSYHAGLTDTDRESRQKDWLTGKMRVICATVAFGMGIDKPDVRFVLHYSLPKSIEGYYQEAGRAGRDGDVADCILYYNYSDMLRIKKMLDSDKALQYNVKKIHVDNLYRIVGYCENLTDCRRAQQLDYFGEHFTSEQCLENRETACDNCINKRAYKAVDALEHARKAARAVKDLCSGRSRFTLLHIADVLKGSKIKKIIDFNHHKTPHHGVLKDWDKNDVHRLLRKMVIDGFLREDLIFTNDFPQAYLYLGNNISKLMEGTPNFEFAVTKNAKEAKAAVGSVSDGATSSTADGQSGMREIHERCYTDLLDLCRTIASQRNVTMASIMNIQALKSMAETLPITEKDMCSIPHVTKANFDKYGAKLLEITSNYASEKLLMQAVLDEEEEQAAAKQRPSTSGWNNESVDWDMAVASQGNANTSGASGFNSFRAGKRKKIYKSGASKRYKTSTTSPAARKTTSARGRGGRAGAKRAESSASSASGWKSKKTGNSFGFDLMPLPGSK</sequence>
<proteinExistence type="evidence at protein level"/>